<protein>
    <recommendedName>
        <fullName evidence="6">Broad substrate specificity ATP-binding cassette transporter ABCG2</fullName>
        <ecNumber evidence="2">7.6.2.2</ecNumber>
    </recommendedName>
    <alternativeName>
        <fullName>ATP-binding cassette sub-family G member 2</fullName>
    </alternativeName>
    <alternativeName>
        <fullName>Urate exporter</fullName>
    </alternativeName>
    <cdAntigenName>CD338</cdAntigenName>
</protein>
<evidence type="ECO:0000250" key="1">
    <source>
        <dbReference type="UniProtKB" id="Q7TMS5"/>
    </source>
</evidence>
<evidence type="ECO:0000250" key="2">
    <source>
        <dbReference type="UniProtKB" id="Q9UNQ0"/>
    </source>
</evidence>
<evidence type="ECO:0000255" key="3"/>
<evidence type="ECO:0000255" key="4">
    <source>
        <dbReference type="PROSITE-ProRule" id="PRU00434"/>
    </source>
</evidence>
<evidence type="ECO:0000269" key="5">
    <source>
    </source>
</evidence>
<evidence type="ECO:0000305" key="6"/>
<organism>
    <name type="scientific">Bos taurus</name>
    <name type="common">Bovine</name>
    <dbReference type="NCBI Taxonomy" id="9913"/>
    <lineage>
        <taxon>Eukaryota</taxon>
        <taxon>Metazoa</taxon>
        <taxon>Chordata</taxon>
        <taxon>Craniata</taxon>
        <taxon>Vertebrata</taxon>
        <taxon>Euteleostomi</taxon>
        <taxon>Mammalia</taxon>
        <taxon>Eutheria</taxon>
        <taxon>Laurasiatheria</taxon>
        <taxon>Artiodactyla</taxon>
        <taxon>Ruminantia</taxon>
        <taxon>Pecora</taxon>
        <taxon>Bovidae</taxon>
        <taxon>Bovinae</taxon>
        <taxon>Bos</taxon>
    </lineage>
</organism>
<name>ABCG2_BOVIN</name>
<dbReference type="EC" id="7.6.2.2" evidence="2"/>
<dbReference type="EMBL" id="AJ871176">
    <property type="protein sequence ID" value="CAI38796.1"/>
    <property type="status" value="ALT_INIT"/>
    <property type="molecule type" value="Genomic_DNA"/>
</dbReference>
<dbReference type="RefSeq" id="XP_005207851.1">
    <property type="nucleotide sequence ID" value="XM_005207794.2"/>
</dbReference>
<dbReference type="RefSeq" id="XP_005207852.1">
    <property type="nucleotide sequence ID" value="XM_005207795.3"/>
</dbReference>
<dbReference type="RefSeq" id="XP_005207853.1">
    <property type="nucleotide sequence ID" value="XM_005207796.2"/>
</dbReference>
<dbReference type="RefSeq" id="XP_005207854.1">
    <property type="nucleotide sequence ID" value="XM_005207797.3"/>
</dbReference>
<dbReference type="RefSeq" id="XP_010804335.1">
    <property type="nucleotide sequence ID" value="XM_010806033.2"/>
</dbReference>
<dbReference type="RefSeq" id="XP_010804337.1">
    <property type="nucleotide sequence ID" value="XM_010806035.2"/>
</dbReference>
<dbReference type="SMR" id="Q4GZT4"/>
<dbReference type="FunCoup" id="Q4GZT4">
    <property type="interactions" value="134"/>
</dbReference>
<dbReference type="STRING" id="9913.ENSBTAP00000073659"/>
<dbReference type="GlyCosmos" id="Q4GZT4">
    <property type="glycosylation" value="2 sites, No reported glycans"/>
</dbReference>
<dbReference type="GlyGen" id="Q4GZT4">
    <property type="glycosylation" value="2 sites"/>
</dbReference>
<dbReference type="PaxDb" id="9913-ENSBTAP00000051068"/>
<dbReference type="GeneID" id="536203"/>
<dbReference type="CTD" id="9429"/>
<dbReference type="eggNOG" id="KOG0061">
    <property type="taxonomic scope" value="Eukaryota"/>
</dbReference>
<dbReference type="HOGENOM" id="CLU_000604_57_8_1"/>
<dbReference type="InParanoid" id="Q4GZT4"/>
<dbReference type="OrthoDB" id="66620at2759"/>
<dbReference type="Proteomes" id="UP000009136">
    <property type="component" value="Unplaced"/>
</dbReference>
<dbReference type="GO" id="GO:0016324">
    <property type="term" value="C:apical plasma membrane"/>
    <property type="evidence" value="ECO:0000250"/>
    <property type="project" value="UniProtKB"/>
</dbReference>
<dbReference type="GO" id="GO:0031526">
    <property type="term" value="C:brush border membrane"/>
    <property type="evidence" value="ECO:0000250"/>
    <property type="project" value="UniProtKB"/>
</dbReference>
<dbReference type="GO" id="GO:0045121">
    <property type="term" value="C:membrane raft"/>
    <property type="evidence" value="ECO:0000250"/>
    <property type="project" value="UniProtKB"/>
</dbReference>
<dbReference type="GO" id="GO:0031966">
    <property type="term" value="C:mitochondrial membrane"/>
    <property type="evidence" value="ECO:0007669"/>
    <property type="project" value="UniProtKB-SubCell"/>
</dbReference>
<dbReference type="GO" id="GO:0005886">
    <property type="term" value="C:plasma membrane"/>
    <property type="evidence" value="ECO:0000318"/>
    <property type="project" value="GO_Central"/>
</dbReference>
<dbReference type="GO" id="GO:0008559">
    <property type="term" value="F:ABC-type xenobiotic transporter activity"/>
    <property type="evidence" value="ECO:0007669"/>
    <property type="project" value="UniProtKB-EC"/>
</dbReference>
<dbReference type="GO" id="GO:0005524">
    <property type="term" value="F:ATP binding"/>
    <property type="evidence" value="ECO:0007669"/>
    <property type="project" value="UniProtKB-KW"/>
</dbReference>
<dbReference type="GO" id="GO:0016887">
    <property type="term" value="F:ATP hydrolysis activity"/>
    <property type="evidence" value="ECO:0007669"/>
    <property type="project" value="InterPro"/>
</dbReference>
<dbReference type="GO" id="GO:0042626">
    <property type="term" value="F:ATPase-coupled transmembrane transporter activity"/>
    <property type="evidence" value="ECO:0000250"/>
    <property type="project" value="UniProtKB"/>
</dbReference>
<dbReference type="GO" id="GO:0015225">
    <property type="term" value="F:biotin transmembrane transporter activity"/>
    <property type="evidence" value="ECO:0000250"/>
    <property type="project" value="UniProtKB"/>
</dbReference>
<dbReference type="GO" id="GO:0015562">
    <property type="term" value="F:efflux transmembrane transporter activity"/>
    <property type="evidence" value="ECO:0000250"/>
    <property type="project" value="UniProtKB"/>
</dbReference>
<dbReference type="GO" id="GO:0032217">
    <property type="term" value="F:riboflavin transmembrane transporter activity"/>
    <property type="evidence" value="ECO:0000250"/>
    <property type="project" value="UniProtKB"/>
</dbReference>
<dbReference type="GO" id="GO:0015143">
    <property type="term" value="F:urate transmembrane transporter activity"/>
    <property type="evidence" value="ECO:0000250"/>
    <property type="project" value="UniProtKB"/>
</dbReference>
<dbReference type="GO" id="GO:0015878">
    <property type="term" value="P:biotin transport"/>
    <property type="evidence" value="ECO:0000250"/>
    <property type="project" value="UniProtKB"/>
</dbReference>
<dbReference type="GO" id="GO:0006869">
    <property type="term" value="P:lipid transport"/>
    <property type="evidence" value="ECO:0007669"/>
    <property type="project" value="UniProtKB-KW"/>
</dbReference>
<dbReference type="GO" id="GO:0097744">
    <property type="term" value="P:renal urate salt excretion"/>
    <property type="evidence" value="ECO:0000250"/>
    <property type="project" value="UniProtKB"/>
</dbReference>
<dbReference type="GO" id="GO:0032218">
    <property type="term" value="P:riboflavin transport"/>
    <property type="evidence" value="ECO:0000250"/>
    <property type="project" value="UniProtKB"/>
</dbReference>
<dbReference type="GO" id="GO:0055085">
    <property type="term" value="P:transmembrane transport"/>
    <property type="evidence" value="ECO:0000250"/>
    <property type="project" value="UniProtKB"/>
</dbReference>
<dbReference type="CDD" id="cd03213">
    <property type="entry name" value="ABCG_EPDR"/>
    <property type="match status" value="1"/>
</dbReference>
<dbReference type="FunFam" id="3.40.50.300:FF:000622">
    <property type="entry name" value="ATP-binding cassette sub-family G member 2"/>
    <property type="match status" value="1"/>
</dbReference>
<dbReference type="Gene3D" id="3.40.50.300">
    <property type="entry name" value="P-loop containing nucleotide triphosphate hydrolases"/>
    <property type="match status" value="1"/>
</dbReference>
<dbReference type="InterPro" id="IPR003593">
    <property type="entry name" value="AAA+_ATPase"/>
</dbReference>
<dbReference type="InterPro" id="IPR013525">
    <property type="entry name" value="ABC2_TM"/>
</dbReference>
<dbReference type="InterPro" id="IPR003439">
    <property type="entry name" value="ABC_transporter-like_ATP-bd"/>
</dbReference>
<dbReference type="InterPro" id="IPR043926">
    <property type="entry name" value="ABCG_dom"/>
</dbReference>
<dbReference type="InterPro" id="IPR050352">
    <property type="entry name" value="ABCG_transporters"/>
</dbReference>
<dbReference type="InterPro" id="IPR027417">
    <property type="entry name" value="P-loop_NTPase"/>
</dbReference>
<dbReference type="PANTHER" id="PTHR48041">
    <property type="entry name" value="ABC TRANSPORTER G FAMILY MEMBER 28"/>
    <property type="match status" value="1"/>
</dbReference>
<dbReference type="PANTHER" id="PTHR48041:SF92">
    <property type="entry name" value="BROAD SUBSTRATE SPECIFICITY ATP-BINDING CASSETTE TRANSPORTER ABCG2"/>
    <property type="match status" value="1"/>
</dbReference>
<dbReference type="Pfam" id="PF01061">
    <property type="entry name" value="ABC2_membrane"/>
    <property type="match status" value="1"/>
</dbReference>
<dbReference type="Pfam" id="PF19055">
    <property type="entry name" value="ABC2_membrane_7"/>
    <property type="match status" value="1"/>
</dbReference>
<dbReference type="Pfam" id="PF00005">
    <property type="entry name" value="ABC_tran"/>
    <property type="match status" value="1"/>
</dbReference>
<dbReference type="SMART" id="SM00382">
    <property type="entry name" value="AAA"/>
    <property type="match status" value="1"/>
</dbReference>
<dbReference type="SUPFAM" id="SSF52540">
    <property type="entry name" value="P-loop containing nucleoside triphosphate hydrolases"/>
    <property type="match status" value="1"/>
</dbReference>
<dbReference type="PROSITE" id="PS50893">
    <property type="entry name" value="ABC_TRANSPORTER_2"/>
    <property type="match status" value="1"/>
</dbReference>
<reference key="1">
    <citation type="journal article" date="2005" name="Genome Res.">
        <title>Identification of a missense mutation in the bovine ABCG2 gene with a major effect on the QTL on chromosome 6 affecting milk yield and composition in Holstein cattle.</title>
        <authorList>
            <person name="Cohen-Zinder M."/>
            <person name="Seroussi E."/>
            <person name="Larkin D.M."/>
            <person name="Loor J.J."/>
            <person name="Everts-van der Wind A."/>
            <person name="Lee J.-H."/>
            <person name="Drackley J.K."/>
            <person name="Band M.R."/>
            <person name="Hernandez A.G."/>
            <person name="Shani M."/>
            <person name="Lewin H.A."/>
            <person name="Weller J.I."/>
            <person name="Ron M."/>
        </authorList>
    </citation>
    <scope>NUCLEOTIDE SEQUENCE [GENOMIC DNA]</scope>
    <scope>VARIANT SER-578</scope>
    <source>
        <strain>Holstein</strain>
    </source>
</reference>
<sequence length="655" mass="72725">MSSNSYEVSIPMSKKLNGIPETTSKDLQTLTEGAVLSFHNICYRVKVKTGFLLCRKTIEKEILANINGVMKPGLNAILGPTGGGKSSLLDILAARKDPHGLSGDVLINGAPRPANFKCNSGYVVQDDVVMGTLTVRENLQFSAALRLPTTMTSYEKNERINKVIQELGLDKVADSKVGTQFIRGVSGGERKRTSIAMELITDPSILFLDEPTTGLDSSTANAVLLLLKRMSKQGRTIIFSIHQPRYSIFKLFDSLTLLASGRLMFHGPAQEALGYFGAIGFRCEPYNNPADFFLDIINGDSSAVVLNREDIGDEANETEEPSKKDTPLIEKLAEFYVNSSFFKETKVELDKFSGDQRRKKLPSYKEVTYATSFCHQLKWISRRSFKNLLGNPQASIAQLIVTVFLGLVIGAIFYDLKNDPAGIQNRAGVLFFLTTNQCFSSVSAVELLVVEKKLFIHEYISGYYRVSSYFFGKLLSDLLPMRMLPSIIFTCITYFLLGLKPKVEAFFIMMLTLMMVAYSASSMALAIAAGQSVVSIATLLMTISFVFMMIFSGLLVNLKTVVPWLSWLQYLSIPRYGYAALQHNEFLGQNFCPGLNVTTNNTCSYAICTGEEFLTNQGIDISPWGLWKNHVALACMIVIFLTIAYLKLLFLKKFS</sequence>
<keyword id="KW-0067">ATP-binding</keyword>
<keyword id="KW-1003">Cell membrane</keyword>
<keyword id="KW-1015">Disulfide bond</keyword>
<keyword id="KW-0325">Glycoprotein</keyword>
<keyword id="KW-0445">Lipid transport</keyword>
<keyword id="KW-0472">Membrane</keyword>
<keyword id="KW-0496">Mitochondrion</keyword>
<keyword id="KW-0547">Nucleotide-binding</keyword>
<keyword id="KW-0597">Phosphoprotein</keyword>
<keyword id="KW-1185">Reference proteome</keyword>
<keyword id="KW-1278">Translocase</keyword>
<keyword id="KW-0812">Transmembrane</keyword>
<keyword id="KW-1133">Transmembrane helix</keyword>
<keyword id="KW-0813">Transport</keyword>
<feature type="chain" id="PRO_0000244032" description="Broad substrate specificity ATP-binding cassette transporter ABCG2">
    <location>
        <begin position="1"/>
        <end position="655"/>
    </location>
</feature>
<feature type="topological domain" description="Cytoplasmic" evidence="3">
    <location>
        <begin position="1"/>
        <end position="395"/>
    </location>
</feature>
<feature type="transmembrane region" description="Helical" evidence="3">
    <location>
        <begin position="396"/>
        <end position="416"/>
    </location>
</feature>
<feature type="topological domain" description="Extracellular" evidence="3">
    <location>
        <begin position="417"/>
        <end position="428"/>
    </location>
</feature>
<feature type="transmembrane region" description="Helical" evidence="3">
    <location>
        <begin position="429"/>
        <end position="449"/>
    </location>
</feature>
<feature type="topological domain" description="Cytoplasmic" evidence="3">
    <location>
        <begin position="450"/>
        <end position="477"/>
    </location>
</feature>
<feature type="transmembrane region" description="Helical" evidence="3">
    <location>
        <begin position="478"/>
        <end position="498"/>
    </location>
</feature>
<feature type="topological domain" description="Extracellular" evidence="3">
    <location>
        <begin position="499"/>
        <end position="506"/>
    </location>
</feature>
<feature type="transmembrane region" description="Helical" evidence="3">
    <location>
        <begin position="507"/>
        <end position="527"/>
    </location>
</feature>
<feature type="topological domain" description="Cytoplasmic" evidence="3">
    <location>
        <begin position="528"/>
        <end position="535"/>
    </location>
</feature>
<feature type="transmembrane region" description="Helical" evidence="3">
    <location>
        <begin position="536"/>
        <end position="556"/>
    </location>
</feature>
<feature type="topological domain" description="Extracellular" evidence="3">
    <location>
        <begin position="557"/>
        <end position="630"/>
    </location>
</feature>
<feature type="transmembrane region" description="Helical" evidence="3">
    <location>
        <begin position="631"/>
        <end position="651"/>
    </location>
</feature>
<feature type="topological domain" description="Cytoplasmic" evidence="3">
    <location>
        <begin position="652"/>
        <end position="655"/>
    </location>
</feature>
<feature type="domain" description="ABC transporter" evidence="4">
    <location>
        <begin position="36"/>
        <end position="285"/>
    </location>
</feature>
<feature type="domain" description="ABC transmembrane type-2">
    <location>
        <begin position="389"/>
        <end position="651"/>
    </location>
</feature>
<feature type="binding site" evidence="4">
    <location>
        <begin position="79"/>
        <end position="86"/>
    </location>
    <ligand>
        <name>ATP</name>
        <dbReference type="ChEBI" id="CHEBI:30616"/>
    </ligand>
</feature>
<feature type="binding site" evidence="2">
    <location>
        <begin position="183"/>
        <end position="189"/>
    </location>
    <ligand>
        <name>ATP</name>
        <dbReference type="ChEBI" id="CHEBI:30616"/>
    </ligand>
</feature>
<feature type="binding site" evidence="2">
    <location>
        <position position="210"/>
    </location>
    <ligand>
        <name>ATP</name>
        <dbReference type="ChEBI" id="CHEBI:30616"/>
    </ligand>
</feature>
<feature type="binding site" evidence="2">
    <location>
        <position position="242"/>
    </location>
    <ligand>
        <name>ATP</name>
        <dbReference type="ChEBI" id="CHEBI:30616"/>
    </ligand>
</feature>
<feature type="glycosylation site" description="N-linked (GlcNAc...) asparagine" evidence="3">
    <location>
        <position position="596"/>
    </location>
</feature>
<feature type="glycosylation site" description="N-linked (GlcNAc...) asparagine" evidence="3">
    <location>
        <position position="600"/>
    </location>
</feature>
<feature type="disulfide bond" evidence="2">
    <location>
        <begin position="592"/>
        <end position="608"/>
    </location>
</feature>
<feature type="disulfide bond" description="Interchain" evidence="2">
    <location>
        <position position="603"/>
    </location>
</feature>
<feature type="sequence variant" description="Affecting milk fat and protein concentration." evidence="5">
    <original>Y</original>
    <variation>S</variation>
    <location>
        <position position="578"/>
    </location>
</feature>
<gene>
    <name type="primary">ABCG2</name>
</gene>
<proteinExistence type="inferred from homology"/>
<accession>Q4GZT4</accession>
<comment type="function">
    <text evidence="1 2">Broad substrate specificity ATP-dependent transporter of the ATP-binding cassette (ABC) family that actively extrudes a wide variety of physiological compounds, dietary toxins and xenobiotics from cells. Involved in porphyrin homeostasis, mediating the export of protoporphyrin IX (PPIX) from both mitochondria to cytosol and cytosol to extracellular space, it also functions in the cellular export of heme. Also mediates the efflux of sphingosine-1-P from cells. Acts as a urate exporter functioning in both renal and extrarenal urate excretion (By similarity). In kidney, it also functions as a physiological exporter of the uremic toxin indoxyl sulfate (By similarity). Also involved in the excretion of steroids like estrone 3-sulfate/E1S, 3beta-sulfooxy-androst-5-en-17-one/DHEAS, and other sulfate conjugates (By similarity). Mediates the secretion of the riboflavin and biotin vitamins into milk. Extrudes pheophorbide a, a phototoxic porphyrin catabolite of chlorophyll, reducing its bioavailability (By similarity). Plays an important role in the exclusion of xenobiotics from the brain. It confers to cells a resistance to multiple drugs and other xenobiotics including mitoxantrone, pheophorbide, camptothecin, methotrexate, azidothymidine, and the anthracyclines daunorubicin and doxorubicin, through the control of their efflux (By similarity). In placenta, it limits the penetration of drugs from the maternal plasma into the fetus. May play a role in early stem cell self-renewal by blocking differentiation (By similarity). In inflammatory macrophages, exports itaconate from the cytosol to the extracellular compartment and limits the activation of TFEB-dependent lysosome biogenesis involved in antibacterial innate immune response.</text>
</comment>
<comment type="catalytic activity">
    <reaction evidence="2">
        <text>ATP + H2O + xenobioticSide 1 = ADP + phosphate + xenobioticSide 2.</text>
        <dbReference type="EC" id="7.6.2.2"/>
    </reaction>
</comment>
<comment type="catalytic activity">
    <reaction evidence="2">
        <text>urate(in) + ATP + H2O = urate(out) + ADP + phosphate + H(+)</text>
        <dbReference type="Rhea" id="RHEA:16461"/>
        <dbReference type="ChEBI" id="CHEBI:15377"/>
        <dbReference type="ChEBI" id="CHEBI:15378"/>
        <dbReference type="ChEBI" id="CHEBI:17775"/>
        <dbReference type="ChEBI" id="CHEBI:30616"/>
        <dbReference type="ChEBI" id="CHEBI:43474"/>
        <dbReference type="ChEBI" id="CHEBI:456216"/>
    </reaction>
    <physiologicalReaction direction="left-to-right" evidence="2">
        <dbReference type="Rhea" id="RHEA:16462"/>
    </physiologicalReaction>
</comment>
<comment type="catalytic activity">
    <reaction evidence="1">
        <text>indoxyl sulfate(in) + ATP + H2O = indoxyl sulfate(out) + ADP + phosphate + H(+)</text>
        <dbReference type="Rhea" id="RHEA:61332"/>
        <dbReference type="ChEBI" id="CHEBI:15377"/>
        <dbReference type="ChEBI" id="CHEBI:15378"/>
        <dbReference type="ChEBI" id="CHEBI:30616"/>
        <dbReference type="ChEBI" id="CHEBI:43474"/>
        <dbReference type="ChEBI" id="CHEBI:144643"/>
        <dbReference type="ChEBI" id="CHEBI:456216"/>
    </reaction>
    <physiologicalReaction direction="left-to-right" evidence="1">
        <dbReference type="Rhea" id="RHEA:61333"/>
    </physiologicalReaction>
</comment>
<comment type="catalytic activity">
    <reaction evidence="2">
        <text>sphing-4-enine 1-phosphate(in) + ATP + H2O = sphing-4-enine 1-phosphate(out) + ADP + phosphate + H(+)</text>
        <dbReference type="Rhea" id="RHEA:38951"/>
        <dbReference type="ChEBI" id="CHEBI:15377"/>
        <dbReference type="ChEBI" id="CHEBI:15378"/>
        <dbReference type="ChEBI" id="CHEBI:30616"/>
        <dbReference type="ChEBI" id="CHEBI:43474"/>
        <dbReference type="ChEBI" id="CHEBI:60119"/>
        <dbReference type="ChEBI" id="CHEBI:456216"/>
    </reaction>
    <physiologicalReaction direction="left-to-right" evidence="2">
        <dbReference type="Rhea" id="RHEA:38952"/>
    </physiologicalReaction>
</comment>
<comment type="catalytic activity">
    <reaction evidence="2">
        <text>estrone 3-sulfate(in) + ATP + H2O = estrone 3-sulfate(out) + ADP + phosphate + H(+)</text>
        <dbReference type="Rhea" id="RHEA:61348"/>
        <dbReference type="ChEBI" id="CHEBI:15377"/>
        <dbReference type="ChEBI" id="CHEBI:15378"/>
        <dbReference type="ChEBI" id="CHEBI:30616"/>
        <dbReference type="ChEBI" id="CHEBI:43474"/>
        <dbReference type="ChEBI" id="CHEBI:60050"/>
        <dbReference type="ChEBI" id="CHEBI:456216"/>
    </reaction>
    <physiologicalReaction direction="left-to-right" evidence="2">
        <dbReference type="Rhea" id="RHEA:61349"/>
    </physiologicalReaction>
</comment>
<comment type="catalytic activity">
    <reaction evidence="2">
        <text>dehydroepiandrosterone 3-sulfate(in) + ATP + H2O = dehydroepiandrosterone 3-sulfate(out) + ADP + phosphate + H(+)</text>
        <dbReference type="Rhea" id="RHEA:61364"/>
        <dbReference type="ChEBI" id="CHEBI:15377"/>
        <dbReference type="ChEBI" id="CHEBI:15378"/>
        <dbReference type="ChEBI" id="CHEBI:30616"/>
        <dbReference type="ChEBI" id="CHEBI:43474"/>
        <dbReference type="ChEBI" id="CHEBI:57905"/>
        <dbReference type="ChEBI" id="CHEBI:456216"/>
    </reaction>
    <physiologicalReaction direction="left-to-right" evidence="2">
        <dbReference type="Rhea" id="RHEA:61365"/>
    </physiologicalReaction>
</comment>
<comment type="catalytic activity">
    <reaction evidence="2">
        <text>4-methylumbelliferone sulfate(in) + ATP + H2O = 4-methylumbelliferone sulfate(out) + ADP + phosphate + H(+)</text>
        <dbReference type="Rhea" id="RHEA:61368"/>
        <dbReference type="ChEBI" id="CHEBI:15377"/>
        <dbReference type="ChEBI" id="CHEBI:15378"/>
        <dbReference type="ChEBI" id="CHEBI:30616"/>
        <dbReference type="ChEBI" id="CHEBI:43474"/>
        <dbReference type="ChEBI" id="CHEBI:144581"/>
        <dbReference type="ChEBI" id="CHEBI:456216"/>
    </reaction>
    <physiologicalReaction direction="left-to-right" evidence="2">
        <dbReference type="Rhea" id="RHEA:61369"/>
    </physiologicalReaction>
</comment>
<comment type="catalytic activity">
    <reaction evidence="2">
        <text>5,7-dimethyl-2-methylamino-4-(3-pyridylmethyl)-1,3-benzothiazol-6-yl beta-D-glucuronate(in) + ATP + H2O = 5,7-dimethyl-2-methylamino-4-(3-pyridylmethyl)-1,3-benzothiazol-6-yl beta-D-glucuronate(out) + ADP + phosphate + H(+)</text>
        <dbReference type="Rhea" id="RHEA:61384"/>
        <dbReference type="ChEBI" id="CHEBI:15377"/>
        <dbReference type="ChEBI" id="CHEBI:15378"/>
        <dbReference type="ChEBI" id="CHEBI:30616"/>
        <dbReference type="ChEBI" id="CHEBI:43474"/>
        <dbReference type="ChEBI" id="CHEBI:144584"/>
        <dbReference type="ChEBI" id="CHEBI:456216"/>
    </reaction>
    <physiologicalReaction direction="left-to-right" evidence="2">
        <dbReference type="Rhea" id="RHEA:61385"/>
    </physiologicalReaction>
</comment>
<comment type="catalytic activity">
    <reaction evidence="2">
        <text>4-methylumbelliferone beta-D-glucuronate(in) + ATP + H2O = 4-methylumbelliferone beta-D-glucuronate(out) + ADP + phosphate + H(+)</text>
        <dbReference type="Rhea" id="RHEA:61372"/>
        <dbReference type="ChEBI" id="CHEBI:15377"/>
        <dbReference type="ChEBI" id="CHEBI:15378"/>
        <dbReference type="ChEBI" id="CHEBI:30616"/>
        <dbReference type="ChEBI" id="CHEBI:43474"/>
        <dbReference type="ChEBI" id="CHEBI:144582"/>
        <dbReference type="ChEBI" id="CHEBI:456216"/>
    </reaction>
    <physiologicalReaction direction="left-to-right" evidence="2">
        <dbReference type="Rhea" id="RHEA:61373"/>
    </physiologicalReaction>
</comment>
<comment type="catalytic activity">
    <reaction evidence="2">
        <text>5,7-dimethyl-2-methylamino-4-(3-pyridylmethyl)-1,3-benzothiazol-6-yl sulfate(in) + ATP + H2O = 5,7-dimethyl-2-methylamino-4-(3-pyridylmethyl)-1,3-benzothiazol-6-yl sulfate(out) + ADP + phosphate + H(+)</text>
        <dbReference type="Rhea" id="RHEA:61376"/>
        <dbReference type="ChEBI" id="CHEBI:15377"/>
        <dbReference type="ChEBI" id="CHEBI:15378"/>
        <dbReference type="ChEBI" id="CHEBI:30616"/>
        <dbReference type="ChEBI" id="CHEBI:43474"/>
        <dbReference type="ChEBI" id="CHEBI:144583"/>
        <dbReference type="ChEBI" id="CHEBI:456216"/>
    </reaction>
    <physiologicalReaction direction="left-to-right" evidence="2">
        <dbReference type="Rhea" id="RHEA:61377"/>
    </physiologicalReaction>
</comment>
<comment type="catalytic activity">
    <reaction evidence="2">
        <text>17beta-estradiol 17-O-(beta-D-glucuronate)(in) + ATP + H2O = 17beta-estradiol 17-O-(beta-D-glucuronate)(out) + ADP + phosphate + H(+)</text>
        <dbReference type="Rhea" id="RHEA:60128"/>
        <dbReference type="ChEBI" id="CHEBI:15377"/>
        <dbReference type="ChEBI" id="CHEBI:15378"/>
        <dbReference type="ChEBI" id="CHEBI:30616"/>
        <dbReference type="ChEBI" id="CHEBI:43474"/>
        <dbReference type="ChEBI" id="CHEBI:82961"/>
        <dbReference type="ChEBI" id="CHEBI:456216"/>
    </reaction>
    <physiologicalReaction direction="left-to-right" evidence="2">
        <dbReference type="Rhea" id="RHEA:60129"/>
    </physiologicalReaction>
</comment>
<comment type="catalytic activity">
    <reaction evidence="2">
        <text>methotrexate(in) + ATP + H2O = methotrexate(out) + ADP + phosphate + H(+)</text>
        <dbReference type="Rhea" id="RHEA:61356"/>
        <dbReference type="ChEBI" id="CHEBI:15377"/>
        <dbReference type="ChEBI" id="CHEBI:15378"/>
        <dbReference type="ChEBI" id="CHEBI:30616"/>
        <dbReference type="ChEBI" id="CHEBI:43474"/>
        <dbReference type="ChEBI" id="CHEBI:50681"/>
        <dbReference type="ChEBI" id="CHEBI:456216"/>
    </reaction>
    <physiologicalReaction direction="left-to-right" evidence="2">
        <dbReference type="Rhea" id="RHEA:61357"/>
    </physiologicalReaction>
</comment>
<comment type="catalytic activity">
    <reaction evidence="1">
        <text>riboflavin(in) + ATP + H2O = riboflavin(out) + ADP + phosphate + H(+)</text>
        <dbReference type="Rhea" id="RHEA:61352"/>
        <dbReference type="ChEBI" id="CHEBI:15377"/>
        <dbReference type="ChEBI" id="CHEBI:15378"/>
        <dbReference type="ChEBI" id="CHEBI:30616"/>
        <dbReference type="ChEBI" id="CHEBI:43474"/>
        <dbReference type="ChEBI" id="CHEBI:57986"/>
        <dbReference type="ChEBI" id="CHEBI:456216"/>
    </reaction>
    <physiologicalReaction direction="left-to-right" evidence="1">
        <dbReference type="Rhea" id="RHEA:61353"/>
    </physiologicalReaction>
</comment>
<comment type="catalytic activity">
    <reaction evidence="1">
        <text>pheophorbide a(in) + ATP + H2O = pheophorbide a(out) + ADP + phosphate + H(+)</text>
        <dbReference type="Rhea" id="RHEA:61360"/>
        <dbReference type="ChEBI" id="CHEBI:15377"/>
        <dbReference type="ChEBI" id="CHEBI:15378"/>
        <dbReference type="ChEBI" id="CHEBI:30616"/>
        <dbReference type="ChEBI" id="CHEBI:43474"/>
        <dbReference type="ChEBI" id="CHEBI:58687"/>
        <dbReference type="ChEBI" id="CHEBI:456216"/>
    </reaction>
    <physiologicalReaction direction="left-to-right" evidence="1">
        <dbReference type="Rhea" id="RHEA:61361"/>
    </physiologicalReaction>
</comment>
<comment type="catalytic activity">
    <reaction evidence="1 2">
        <text>itaconate(in) + ATP + H2O = itaconate(out) + ADP + phosphate + H(+)</text>
        <dbReference type="Rhea" id="RHEA:82291"/>
        <dbReference type="ChEBI" id="CHEBI:15377"/>
        <dbReference type="ChEBI" id="CHEBI:15378"/>
        <dbReference type="ChEBI" id="CHEBI:17240"/>
        <dbReference type="ChEBI" id="CHEBI:30616"/>
        <dbReference type="ChEBI" id="CHEBI:43474"/>
        <dbReference type="ChEBI" id="CHEBI:456216"/>
    </reaction>
    <physiologicalReaction direction="left-to-right" evidence="1 2">
        <dbReference type="Rhea" id="RHEA:82292"/>
    </physiologicalReaction>
</comment>
<comment type="subunit">
    <text evidence="2">Homodimer; disulfide-linked. The minimal functional unit is a homodimer, but the major oligomeric form in plasma membrane is a homotetramer with possibility of higher order oligomerization up to homododecamers.</text>
</comment>
<comment type="subcellular location">
    <subcellularLocation>
        <location evidence="2">Cell membrane</location>
        <topology evidence="3">Multi-pass membrane protein</topology>
    </subcellularLocation>
    <subcellularLocation>
        <location evidence="2">Apical cell membrane</location>
        <topology evidence="3">Multi-pass membrane protein</topology>
    </subcellularLocation>
    <subcellularLocation>
        <location evidence="2">Mitochondrion membrane</location>
        <topology evidence="3">Multi-pass membrane protein</topology>
    </subcellularLocation>
    <text evidence="2">Enriched in membrane lipid rafts.</text>
</comment>
<comment type="domain">
    <text evidence="2">The extracellular loop 3 (ECL3) is involved in binding porphyrins and transfer them to other carriers, probably albumin.</text>
</comment>
<comment type="PTM">
    <text evidence="2">N-glycosylated. Glycosylation-deficient ABCG2 is normally expressed and functional.</text>
</comment>
<comment type="PTM">
    <text evidence="2">Phosphorylated. Phosphorylation may regulate the localization to the plasma membrane, the homooligomerization and therefore, the activity of the transporter.</text>
</comment>
<comment type="similarity">
    <text evidence="6">Belongs to the ABC transporter superfamily. ABCG family. Eye pigment precursor importer (TC 3.A.1.204) subfamily.</text>
</comment>
<comment type="sequence caution" evidence="6">
    <conflict type="erroneous initiation">
        <sequence resource="EMBL-CDS" id="CAI38796"/>
    </conflict>
</comment>